<feature type="chain" id="PRO_0000245924" description="FMN-dependent NADH:quinone oxidoreductase 2">
    <location>
        <begin position="1"/>
        <end position="240"/>
    </location>
</feature>
<feature type="binding site" evidence="1">
    <location>
        <position position="10"/>
    </location>
    <ligand>
        <name>FMN</name>
        <dbReference type="ChEBI" id="CHEBI:58210"/>
    </ligand>
</feature>
<feature type="binding site" evidence="1">
    <location>
        <begin position="23"/>
        <end position="25"/>
    </location>
    <ligand>
        <name>FMN</name>
        <dbReference type="ChEBI" id="CHEBI:58210"/>
    </ligand>
</feature>
<evidence type="ECO:0000255" key="1">
    <source>
        <dbReference type="HAMAP-Rule" id="MF_01216"/>
    </source>
</evidence>
<accession>Q5R0V3</accession>
<dbReference type="EC" id="1.6.5.-" evidence="1"/>
<dbReference type="EC" id="1.7.1.17" evidence="1"/>
<dbReference type="EMBL" id="AE017340">
    <property type="protein sequence ID" value="AAV82446.1"/>
    <property type="molecule type" value="Genomic_DNA"/>
</dbReference>
<dbReference type="RefSeq" id="WP_011234850.1">
    <property type="nucleotide sequence ID" value="NC_006512.1"/>
</dbReference>
<dbReference type="SMR" id="Q5R0V3"/>
<dbReference type="STRING" id="283942.IL1610"/>
<dbReference type="GeneID" id="41336787"/>
<dbReference type="KEGG" id="ilo:IL1610"/>
<dbReference type="eggNOG" id="COG1182">
    <property type="taxonomic scope" value="Bacteria"/>
</dbReference>
<dbReference type="HOGENOM" id="CLU_088964_0_3_6"/>
<dbReference type="OrthoDB" id="9787136at2"/>
<dbReference type="Proteomes" id="UP000001171">
    <property type="component" value="Chromosome"/>
</dbReference>
<dbReference type="GO" id="GO:0009055">
    <property type="term" value="F:electron transfer activity"/>
    <property type="evidence" value="ECO:0007669"/>
    <property type="project" value="UniProtKB-UniRule"/>
</dbReference>
<dbReference type="GO" id="GO:0010181">
    <property type="term" value="F:FMN binding"/>
    <property type="evidence" value="ECO:0007669"/>
    <property type="project" value="UniProtKB-UniRule"/>
</dbReference>
<dbReference type="GO" id="GO:0016652">
    <property type="term" value="F:oxidoreductase activity, acting on NAD(P)H as acceptor"/>
    <property type="evidence" value="ECO:0007669"/>
    <property type="project" value="UniProtKB-UniRule"/>
</dbReference>
<dbReference type="GO" id="GO:0016655">
    <property type="term" value="F:oxidoreductase activity, acting on NAD(P)H, quinone or similar compound as acceptor"/>
    <property type="evidence" value="ECO:0007669"/>
    <property type="project" value="InterPro"/>
</dbReference>
<dbReference type="Gene3D" id="3.40.50.360">
    <property type="match status" value="1"/>
</dbReference>
<dbReference type="HAMAP" id="MF_01216">
    <property type="entry name" value="Azoreductase_type1"/>
    <property type="match status" value="1"/>
</dbReference>
<dbReference type="InterPro" id="IPR003680">
    <property type="entry name" value="Flavodoxin_fold"/>
</dbReference>
<dbReference type="InterPro" id="IPR029039">
    <property type="entry name" value="Flavoprotein-like_sf"/>
</dbReference>
<dbReference type="InterPro" id="IPR050104">
    <property type="entry name" value="FMN-dep_NADH:Q_OxRdtase_AzoR1"/>
</dbReference>
<dbReference type="InterPro" id="IPR023048">
    <property type="entry name" value="NADH:quinone_OxRdtase_FMN_depd"/>
</dbReference>
<dbReference type="PANTHER" id="PTHR43741">
    <property type="entry name" value="FMN-DEPENDENT NADH-AZOREDUCTASE 1"/>
    <property type="match status" value="1"/>
</dbReference>
<dbReference type="PANTHER" id="PTHR43741:SF2">
    <property type="entry name" value="FMN-DEPENDENT NADH:QUINONE OXIDOREDUCTASE"/>
    <property type="match status" value="1"/>
</dbReference>
<dbReference type="Pfam" id="PF02525">
    <property type="entry name" value="Flavodoxin_2"/>
    <property type="match status" value="1"/>
</dbReference>
<dbReference type="SUPFAM" id="SSF52218">
    <property type="entry name" value="Flavoproteins"/>
    <property type="match status" value="1"/>
</dbReference>
<proteinExistence type="inferred from homology"/>
<reference key="1">
    <citation type="journal article" date="2004" name="Proc. Natl. Acad. Sci. U.S.A.">
        <title>Genome sequence of the deep-sea gamma-proteobacterium Idiomarina loihiensis reveals amino acid fermentation as a source of carbon and energy.</title>
        <authorList>
            <person name="Hou S."/>
            <person name="Saw J.H."/>
            <person name="Lee K.S."/>
            <person name="Freitas T.A."/>
            <person name="Belisle C."/>
            <person name="Kawarabayasi Y."/>
            <person name="Donachie S.P."/>
            <person name="Pikina A."/>
            <person name="Galperin M.Y."/>
            <person name="Koonin E.V."/>
            <person name="Makarova K.S."/>
            <person name="Omelchenko M.V."/>
            <person name="Sorokin A."/>
            <person name="Wolf Y.I."/>
            <person name="Li Q.X."/>
            <person name="Keum Y.S."/>
            <person name="Campbell S."/>
            <person name="Denery J."/>
            <person name="Aizawa S."/>
            <person name="Shibata S."/>
            <person name="Malahoff A."/>
            <person name="Alam M."/>
        </authorList>
    </citation>
    <scope>NUCLEOTIDE SEQUENCE [LARGE SCALE GENOMIC DNA]</scope>
    <source>
        <strain>ATCC BAA-735 / DSM 15497 / L2-TR</strain>
    </source>
</reference>
<keyword id="KW-0285">Flavoprotein</keyword>
<keyword id="KW-0288">FMN</keyword>
<keyword id="KW-0520">NAD</keyword>
<keyword id="KW-0560">Oxidoreductase</keyword>
<keyword id="KW-1185">Reference proteome</keyword>
<name>AZOR2_IDILO</name>
<protein>
    <recommendedName>
        <fullName evidence="1">FMN-dependent NADH:quinone oxidoreductase 2</fullName>
        <ecNumber evidence="1">1.6.5.-</ecNumber>
    </recommendedName>
    <alternativeName>
        <fullName evidence="1">Azo-dye reductase 2</fullName>
    </alternativeName>
    <alternativeName>
        <fullName evidence="1">FMN-dependent NADH-azo compound oxidoreductase 2</fullName>
    </alternativeName>
    <alternativeName>
        <fullName evidence="1">FMN-dependent NADH-azoreductase 2</fullName>
        <ecNumber evidence="1">1.7.1.17</ecNumber>
    </alternativeName>
</protein>
<comment type="function">
    <text evidence="1">Quinone reductase that provides resistance to thiol-specific stress caused by electrophilic quinones.</text>
</comment>
<comment type="function">
    <text evidence="1">Also exhibits azoreductase activity. Catalyzes the reductive cleavage of the azo bond in aromatic azo compounds to the corresponding amines.</text>
</comment>
<comment type="catalytic activity">
    <reaction evidence="1">
        <text>2 a quinone + NADH + H(+) = 2 a 1,4-benzosemiquinone + NAD(+)</text>
        <dbReference type="Rhea" id="RHEA:65952"/>
        <dbReference type="ChEBI" id="CHEBI:15378"/>
        <dbReference type="ChEBI" id="CHEBI:57540"/>
        <dbReference type="ChEBI" id="CHEBI:57945"/>
        <dbReference type="ChEBI" id="CHEBI:132124"/>
        <dbReference type="ChEBI" id="CHEBI:134225"/>
    </reaction>
</comment>
<comment type="catalytic activity">
    <reaction evidence="1">
        <text>N,N-dimethyl-1,4-phenylenediamine + anthranilate + 2 NAD(+) = 2-(4-dimethylaminophenyl)diazenylbenzoate + 2 NADH + 2 H(+)</text>
        <dbReference type="Rhea" id="RHEA:55872"/>
        <dbReference type="ChEBI" id="CHEBI:15378"/>
        <dbReference type="ChEBI" id="CHEBI:15783"/>
        <dbReference type="ChEBI" id="CHEBI:16567"/>
        <dbReference type="ChEBI" id="CHEBI:57540"/>
        <dbReference type="ChEBI" id="CHEBI:57945"/>
        <dbReference type="ChEBI" id="CHEBI:71579"/>
        <dbReference type="EC" id="1.7.1.17"/>
    </reaction>
</comment>
<comment type="cofactor">
    <cofactor evidence="1">
        <name>FMN</name>
        <dbReference type="ChEBI" id="CHEBI:58210"/>
    </cofactor>
    <text evidence="1">Binds 1 FMN per subunit.</text>
</comment>
<comment type="subunit">
    <text evidence="1">Homodimer.</text>
</comment>
<comment type="similarity">
    <text evidence="1">Belongs to the azoreductase type 1 family.</text>
</comment>
<organism>
    <name type="scientific">Idiomarina loihiensis (strain ATCC BAA-735 / DSM 15497 / L2-TR)</name>
    <dbReference type="NCBI Taxonomy" id="283942"/>
    <lineage>
        <taxon>Bacteria</taxon>
        <taxon>Pseudomonadati</taxon>
        <taxon>Pseudomonadota</taxon>
        <taxon>Gammaproteobacteria</taxon>
        <taxon>Alteromonadales</taxon>
        <taxon>Idiomarinaceae</taxon>
        <taxon>Idiomarina</taxon>
    </lineage>
</organism>
<sequence>MSTLLHIDSSVRAVSNTNPDHNSISKSIALRFIETWKQHRPQDEYIYRDVGVNPPDFINQDWVGAVFTPDDKRTPEQKERLALSDKLIDEVSAADVIVISSPMYNYGMPAQLKAWFDQIVRINKTFDFDLSRGDFPLQPILSGKTLITVTSSGEFGFEKGGVREGSGHLAPHLRTLSKYLGVDTMYEIVSEYQEFGDDRHRVSVANAKDRAECLASELSLSTTDSLLKSDSVGSDLGITP</sequence>
<gene>
    <name evidence="1" type="primary">azoR2</name>
    <name type="ordered locus">IL1610</name>
</gene>